<sequence length="241" mass="28582">MLYKTKAITLYNINYNDNYSIVHVLTEEFGPVSYLTAKFKKQKTHLSKSFFHPLSLVELEVEHKNLREIQYIKEAKTYIPLVSLLNNPIKSSICIFLAEFISKALKEKQSDKLLFNYILQSIQVLEFIEKNYSNFHLVFTIRLSQFLGFYPNNTDYSKGMYFDMQNGIFVQQQPPHTHFVHSDDSWIVAKLLQMNYENMFHFQFTRNERKKIISQILEYYYLHLGGFSKIKSLAILHSVFD</sequence>
<accession>B6YQ41</accession>
<keyword id="KW-0227">DNA damage</keyword>
<keyword id="KW-0233">DNA recombination</keyword>
<keyword id="KW-0234">DNA repair</keyword>
<keyword id="KW-1185">Reference proteome</keyword>
<evidence type="ECO:0000255" key="1">
    <source>
        <dbReference type="HAMAP-Rule" id="MF_00201"/>
    </source>
</evidence>
<comment type="function">
    <text evidence="1">Involved in DNA repair and RecF pathway recombination.</text>
</comment>
<comment type="similarity">
    <text evidence="1">Belongs to the RecO family.</text>
</comment>
<protein>
    <recommendedName>
        <fullName evidence="1">DNA repair protein RecO</fullName>
    </recommendedName>
    <alternativeName>
        <fullName evidence="1">Recombination protein O</fullName>
    </alternativeName>
</protein>
<name>RECO_AZOPC</name>
<dbReference type="EMBL" id="AP010656">
    <property type="protein sequence ID" value="BAG83313.1"/>
    <property type="molecule type" value="Genomic_DNA"/>
</dbReference>
<dbReference type="RefSeq" id="WP_012573074.1">
    <property type="nucleotide sequence ID" value="NC_011565.1"/>
</dbReference>
<dbReference type="SMR" id="B6YQ41"/>
<dbReference type="STRING" id="511995.CFPG_050"/>
<dbReference type="KEGG" id="aps:CFPG_050"/>
<dbReference type="eggNOG" id="COG1381">
    <property type="taxonomic scope" value="Bacteria"/>
</dbReference>
<dbReference type="HOGENOM" id="CLU_087596_0_0_10"/>
<dbReference type="OrthoDB" id="9789152at2"/>
<dbReference type="Proteomes" id="UP000000723">
    <property type="component" value="Chromosome"/>
</dbReference>
<dbReference type="GO" id="GO:0043590">
    <property type="term" value="C:bacterial nucleoid"/>
    <property type="evidence" value="ECO:0007669"/>
    <property type="project" value="TreeGrafter"/>
</dbReference>
<dbReference type="GO" id="GO:0006310">
    <property type="term" value="P:DNA recombination"/>
    <property type="evidence" value="ECO:0007669"/>
    <property type="project" value="UniProtKB-UniRule"/>
</dbReference>
<dbReference type="GO" id="GO:0006302">
    <property type="term" value="P:double-strand break repair"/>
    <property type="evidence" value="ECO:0007669"/>
    <property type="project" value="TreeGrafter"/>
</dbReference>
<dbReference type="Gene3D" id="2.40.50.140">
    <property type="entry name" value="Nucleic acid-binding proteins"/>
    <property type="match status" value="1"/>
</dbReference>
<dbReference type="Gene3D" id="1.20.1440.120">
    <property type="entry name" value="Recombination protein O, C-terminal domain"/>
    <property type="match status" value="1"/>
</dbReference>
<dbReference type="HAMAP" id="MF_00201">
    <property type="entry name" value="RecO"/>
    <property type="match status" value="1"/>
</dbReference>
<dbReference type="InterPro" id="IPR037278">
    <property type="entry name" value="ARFGAP/RecO"/>
</dbReference>
<dbReference type="InterPro" id="IPR022572">
    <property type="entry name" value="DNA_rep/recomb_RecO_N"/>
</dbReference>
<dbReference type="InterPro" id="IPR012340">
    <property type="entry name" value="NA-bd_OB-fold"/>
</dbReference>
<dbReference type="InterPro" id="IPR003717">
    <property type="entry name" value="RecO"/>
</dbReference>
<dbReference type="InterPro" id="IPR042242">
    <property type="entry name" value="RecO_C"/>
</dbReference>
<dbReference type="PANTHER" id="PTHR33991">
    <property type="entry name" value="DNA REPAIR PROTEIN RECO"/>
    <property type="match status" value="1"/>
</dbReference>
<dbReference type="PANTHER" id="PTHR33991:SF1">
    <property type="entry name" value="DNA REPAIR PROTEIN RECO"/>
    <property type="match status" value="1"/>
</dbReference>
<dbReference type="Pfam" id="PF02565">
    <property type="entry name" value="RecO_C"/>
    <property type="match status" value="1"/>
</dbReference>
<dbReference type="Pfam" id="PF11967">
    <property type="entry name" value="RecO_N"/>
    <property type="match status" value="1"/>
</dbReference>
<dbReference type="SUPFAM" id="SSF57863">
    <property type="entry name" value="ArfGap/RecO-like zinc finger"/>
    <property type="match status" value="1"/>
</dbReference>
<dbReference type="SUPFAM" id="SSF50249">
    <property type="entry name" value="Nucleic acid-binding proteins"/>
    <property type="match status" value="1"/>
</dbReference>
<proteinExistence type="inferred from homology"/>
<feature type="chain" id="PRO_1000193354" description="DNA repair protein RecO">
    <location>
        <begin position="1"/>
        <end position="241"/>
    </location>
</feature>
<organism>
    <name type="scientific">Azobacteroides pseudotrichonymphae genomovar. CFP2</name>
    <dbReference type="NCBI Taxonomy" id="511995"/>
    <lineage>
        <taxon>Bacteria</taxon>
        <taxon>Pseudomonadati</taxon>
        <taxon>Bacteroidota</taxon>
        <taxon>Bacteroidia</taxon>
        <taxon>Bacteroidales</taxon>
        <taxon>Candidatus Azobacteroides</taxon>
    </lineage>
</organism>
<gene>
    <name evidence="1" type="primary">recO</name>
    <name type="ordered locus">CFPG_050</name>
</gene>
<reference key="1">
    <citation type="journal article" date="2008" name="Science">
        <title>Genome of an endosymbiont coupling N2 fixation to cellulolysis within RT protist cells in termite gut.</title>
        <authorList>
            <person name="Hongoh Y."/>
            <person name="Sharma V.K."/>
            <person name="Prakash T."/>
            <person name="Noda S."/>
            <person name="Toh H."/>
            <person name="Taylor T.D."/>
            <person name="Kudo T."/>
            <person name="Sakaki Y."/>
            <person name="Toyoda A."/>
            <person name="Hattori M."/>
            <person name="Ohkuma M."/>
        </authorList>
    </citation>
    <scope>NUCLEOTIDE SEQUENCE [LARGE SCALE GENOMIC DNA]</scope>
</reference>